<protein>
    <recommendedName>
        <fullName>Pre-mRNA-splicing ATP-dependent RNA helicase PRP28</fullName>
        <ecNumber>3.6.4.13</ecNumber>
    </recommendedName>
</protein>
<organism>
    <name type="scientific">Scheffersomyces stipitis (strain ATCC 58785 / CBS 6054 / NBRC 10063 / NRRL Y-11545)</name>
    <name type="common">Yeast</name>
    <name type="synonym">Pichia stipitis</name>
    <dbReference type="NCBI Taxonomy" id="322104"/>
    <lineage>
        <taxon>Eukaryota</taxon>
        <taxon>Fungi</taxon>
        <taxon>Dikarya</taxon>
        <taxon>Ascomycota</taxon>
        <taxon>Saccharomycotina</taxon>
        <taxon>Pichiomycetes</taxon>
        <taxon>Debaryomycetaceae</taxon>
        <taxon>Scheffersomyces</taxon>
    </lineage>
</organism>
<comment type="function">
    <text evidence="1">ATP-dependent RNA helicase involved in mRNA splicing. May destabilize the U1/5'-splice site duplex to permit an effective competition for the 5'-splice site by the U6 snRNA, resulting in the switch between U1 and U6 at the 5'-splice site. May also act to unwind the U4/U6 base-pairing interaction in the U4/U6/U5 snRNP, facilitating the first covalent step of splicing (By similarity).</text>
</comment>
<comment type="catalytic activity">
    <reaction>
        <text>ATP + H2O = ADP + phosphate + H(+)</text>
        <dbReference type="Rhea" id="RHEA:13065"/>
        <dbReference type="ChEBI" id="CHEBI:15377"/>
        <dbReference type="ChEBI" id="CHEBI:15378"/>
        <dbReference type="ChEBI" id="CHEBI:30616"/>
        <dbReference type="ChEBI" id="CHEBI:43474"/>
        <dbReference type="ChEBI" id="CHEBI:456216"/>
        <dbReference type="EC" id="3.6.4.13"/>
    </reaction>
</comment>
<comment type="subunit">
    <text evidence="1">Component of the U5 snRNP complex.</text>
</comment>
<comment type="subcellular location">
    <subcellularLocation>
        <location evidence="1">Cytoplasm</location>
    </subcellularLocation>
    <subcellularLocation>
        <location evidence="1">Nucleus</location>
    </subcellularLocation>
</comment>
<comment type="domain">
    <text>The Q motif is unique to and characteristic of the DEAD box family of RNA helicases and controls ATP binding and hydrolysis.</text>
</comment>
<comment type="similarity">
    <text evidence="4">Belongs to the DEAD box helicase family. DDX23/PRP28 subfamily.</text>
</comment>
<feature type="chain" id="PRO_0000285144" description="Pre-mRNA-splicing ATP-dependent RNA helicase PRP28">
    <location>
        <begin position="1"/>
        <end position="482"/>
    </location>
</feature>
<feature type="domain" description="Helicase ATP-binding" evidence="2">
    <location>
        <begin position="88"/>
        <end position="288"/>
    </location>
</feature>
<feature type="domain" description="Helicase C-terminal" evidence="3">
    <location>
        <begin position="321"/>
        <end position="473"/>
    </location>
</feature>
<feature type="short sequence motif" description="Q motif">
    <location>
        <begin position="56"/>
        <end position="85"/>
    </location>
</feature>
<feature type="short sequence motif" description="DEAD box">
    <location>
        <begin position="220"/>
        <end position="223"/>
    </location>
</feature>
<feature type="binding site" evidence="2">
    <location>
        <begin position="101"/>
        <end position="108"/>
    </location>
    <ligand>
        <name>ATP</name>
        <dbReference type="ChEBI" id="CHEBI:30616"/>
    </ligand>
</feature>
<proteinExistence type="inferred from homology"/>
<dbReference type="EC" id="3.6.4.13"/>
<dbReference type="EMBL" id="CP000496">
    <property type="protein sequence ID" value="ABN64351.2"/>
    <property type="molecule type" value="Genomic_DNA"/>
</dbReference>
<dbReference type="RefSeq" id="XP_001382380.2">
    <property type="nucleotide sequence ID" value="XM_001382343.1"/>
</dbReference>
<dbReference type="SMR" id="A3LNL1"/>
<dbReference type="FunCoup" id="A3LNL1">
    <property type="interactions" value="943"/>
</dbReference>
<dbReference type="STRING" id="322104.A3LNL1"/>
<dbReference type="GeneID" id="4836914"/>
<dbReference type="KEGG" id="pic:PICST_75833"/>
<dbReference type="eggNOG" id="KOG0333">
    <property type="taxonomic scope" value="Eukaryota"/>
</dbReference>
<dbReference type="HOGENOM" id="CLU_003041_11_4_1"/>
<dbReference type="InParanoid" id="A3LNL1"/>
<dbReference type="OMA" id="IFINYKR"/>
<dbReference type="OrthoDB" id="196131at2759"/>
<dbReference type="Proteomes" id="UP000002258">
    <property type="component" value="Chromosome 2"/>
</dbReference>
<dbReference type="GO" id="GO:0005737">
    <property type="term" value="C:cytoplasm"/>
    <property type="evidence" value="ECO:0007669"/>
    <property type="project" value="UniProtKB-SubCell"/>
</dbReference>
<dbReference type="GO" id="GO:0005634">
    <property type="term" value="C:nucleus"/>
    <property type="evidence" value="ECO:0007669"/>
    <property type="project" value="UniProtKB-SubCell"/>
</dbReference>
<dbReference type="GO" id="GO:0005524">
    <property type="term" value="F:ATP binding"/>
    <property type="evidence" value="ECO:0007669"/>
    <property type="project" value="UniProtKB-KW"/>
</dbReference>
<dbReference type="GO" id="GO:0016887">
    <property type="term" value="F:ATP hydrolysis activity"/>
    <property type="evidence" value="ECO:0007669"/>
    <property type="project" value="RHEA"/>
</dbReference>
<dbReference type="GO" id="GO:0003676">
    <property type="term" value="F:nucleic acid binding"/>
    <property type="evidence" value="ECO:0007669"/>
    <property type="project" value="InterPro"/>
</dbReference>
<dbReference type="GO" id="GO:0003724">
    <property type="term" value="F:RNA helicase activity"/>
    <property type="evidence" value="ECO:0007669"/>
    <property type="project" value="UniProtKB-EC"/>
</dbReference>
<dbReference type="GO" id="GO:0006397">
    <property type="term" value="P:mRNA processing"/>
    <property type="evidence" value="ECO:0007669"/>
    <property type="project" value="UniProtKB-KW"/>
</dbReference>
<dbReference type="GO" id="GO:0008380">
    <property type="term" value="P:RNA splicing"/>
    <property type="evidence" value="ECO:0007669"/>
    <property type="project" value="UniProtKB-KW"/>
</dbReference>
<dbReference type="CDD" id="cd18787">
    <property type="entry name" value="SF2_C_DEAD"/>
    <property type="match status" value="1"/>
</dbReference>
<dbReference type="Gene3D" id="3.40.50.300">
    <property type="entry name" value="P-loop containing nucleotide triphosphate hydrolases"/>
    <property type="match status" value="2"/>
</dbReference>
<dbReference type="InterPro" id="IPR011545">
    <property type="entry name" value="DEAD/DEAH_box_helicase_dom"/>
</dbReference>
<dbReference type="InterPro" id="IPR014001">
    <property type="entry name" value="Helicase_ATP-bd"/>
</dbReference>
<dbReference type="InterPro" id="IPR001650">
    <property type="entry name" value="Helicase_C-like"/>
</dbReference>
<dbReference type="InterPro" id="IPR027417">
    <property type="entry name" value="P-loop_NTPase"/>
</dbReference>
<dbReference type="InterPro" id="IPR000629">
    <property type="entry name" value="RNA-helicase_DEAD-box_CS"/>
</dbReference>
<dbReference type="InterPro" id="IPR014014">
    <property type="entry name" value="RNA_helicase_DEAD_Q_motif"/>
</dbReference>
<dbReference type="PANTHER" id="PTHR47958">
    <property type="entry name" value="ATP-DEPENDENT RNA HELICASE DBP3"/>
    <property type="match status" value="1"/>
</dbReference>
<dbReference type="Pfam" id="PF00270">
    <property type="entry name" value="DEAD"/>
    <property type="match status" value="1"/>
</dbReference>
<dbReference type="Pfam" id="PF00271">
    <property type="entry name" value="Helicase_C"/>
    <property type="match status" value="1"/>
</dbReference>
<dbReference type="SMART" id="SM00487">
    <property type="entry name" value="DEXDc"/>
    <property type="match status" value="1"/>
</dbReference>
<dbReference type="SMART" id="SM00490">
    <property type="entry name" value="HELICc"/>
    <property type="match status" value="1"/>
</dbReference>
<dbReference type="SUPFAM" id="SSF52540">
    <property type="entry name" value="P-loop containing nucleoside triphosphate hydrolases"/>
    <property type="match status" value="1"/>
</dbReference>
<dbReference type="PROSITE" id="PS00039">
    <property type="entry name" value="DEAD_ATP_HELICASE"/>
    <property type="match status" value="1"/>
</dbReference>
<dbReference type="PROSITE" id="PS51192">
    <property type="entry name" value="HELICASE_ATP_BIND_1"/>
    <property type="match status" value="1"/>
</dbReference>
<dbReference type="PROSITE" id="PS51194">
    <property type="entry name" value="HELICASE_CTER"/>
    <property type="match status" value="1"/>
</dbReference>
<dbReference type="PROSITE" id="PS51195">
    <property type="entry name" value="Q_MOTIF"/>
    <property type="match status" value="1"/>
</dbReference>
<keyword id="KW-0067">ATP-binding</keyword>
<keyword id="KW-0963">Cytoplasm</keyword>
<keyword id="KW-0347">Helicase</keyword>
<keyword id="KW-0378">Hydrolase</keyword>
<keyword id="KW-0507">mRNA processing</keyword>
<keyword id="KW-0508">mRNA splicing</keyword>
<keyword id="KW-0547">Nucleotide-binding</keyword>
<keyword id="KW-0539">Nucleus</keyword>
<keyword id="KW-1185">Reference proteome</keyword>
<accession>A3LNL1</accession>
<name>PRP28_PICST</name>
<sequence>MMALEPVSTTRDNIDFVETTHWSEKSLDQMTARDWRIFREDYGITSKGGDIDNPLRTWNEASIPSKLLSIIVDKLEYLEPTPIQRAAIPLALNQRDVVGIAETGSGKTLAFLIPLLSYILNTDKNYLEYEHQQEQNYNKPLGLILAPTRELAQQITKEAQKFGDRLGLNVVSIIGGHQYEETVHSIRTGVHVVVATPGRLVDSLERNIIGLDKCYYLIMDEADRMIDMGFEKALQSILSYVPSTDRLNSTIDSMIFHIKKRITLMFTATISPPIEKITKNFLIKPGYLYIGGAGEALDHIVQNFEYLGSATGGSEDFDSKRFDKLVRIIQQHSRESRQFSIIIFANYKRVCDLLSLELEKNGFRDNVVIHGSKTQELREKAISSFRSHESRILIATDVAARGIDVPNVSLVVNFQMSRKFDEYVHRIGRTGRAGNRGESYTFIDDSDSDVFIDLKKFLVNGGKKCPDWLIKHASTQSQVLRD</sequence>
<evidence type="ECO:0000250" key="1"/>
<evidence type="ECO:0000255" key="2">
    <source>
        <dbReference type="PROSITE-ProRule" id="PRU00541"/>
    </source>
</evidence>
<evidence type="ECO:0000255" key="3">
    <source>
        <dbReference type="PROSITE-ProRule" id="PRU00542"/>
    </source>
</evidence>
<evidence type="ECO:0000305" key="4"/>
<reference key="1">
    <citation type="journal article" date="2007" name="Nat. Biotechnol.">
        <title>Genome sequence of the lignocellulose-bioconverting and xylose-fermenting yeast Pichia stipitis.</title>
        <authorList>
            <person name="Jeffries T.W."/>
            <person name="Grigoriev I.V."/>
            <person name="Grimwood J."/>
            <person name="Laplaza J.M."/>
            <person name="Aerts A."/>
            <person name="Salamov A."/>
            <person name="Schmutz J."/>
            <person name="Lindquist E."/>
            <person name="Dehal P."/>
            <person name="Shapiro H."/>
            <person name="Jin Y.-S."/>
            <person name="Passoth V."/>
            <person name="Richardson P.M."/>
        </authorList>
    </citation>
    <scope>NUCLEOTIDE SEQUENCE [LARGE SCALE GENOMIC DNA]</scope>
    <source>
        <strain>ATCC 58785 / CBS 6054 / NBRC 10063 / NRRL Y-11545</strain>
    </source>
</reference>
<gene>
    <name type="primary">PRP28</name>
    <name type="ORF">PICST_75833</name>
</gene>